<organism>
    <name type="scientific">Bacillus anthracis (strain CDC 684 / NRRL 3495)</name>
    <dbReference type="NCBI Taxonomy" id="568206"/>
    <lineage>
        <taxon>Bacteria</taxon>
        <taxon>Bacillati</taxon>
        <taxon>Bacillota</taxon>
        <taxon>Bacilli</taxon>
        <taxon>Bacillales</taxon>
        <taxon>Bacillaceae</taxon>
        <taxon>Bacillus</taxon>
        <taxon>Bacillus cereus group</taxon>
    </lineage>
</organism>
<gene>
    <name evidence="1" type="primary">mtaD</name>
    <name type="ordered locus">BAMEG_2726</name>
</gene>
<name>MTAD_BACAC</name>
<accession>C3L6N3</accession>
<keyword id="KW-0378">Hydrolase</keyword>
<keyword id="KW-0479">Metal-binding</keyword>
<keyword id="KW-0862">Zinc</keyword>
<proteinExistence type="inferred from homology"/>
<sequence length="435" mass="48144">MKTTYVNATIVTMNEQNEVIENGYIIVENDKIIDVNSGEFASDFEVDEVIDMKGKWVLPGLVNTHTHVVMSLLRGIGDDMLLQPWLETRIWPLESQFTPELAVASTELGLLEMVKSGTTSFSDMFNPIGVDQDAIMETVSRSGMRAAVSRTLFSFGTQEDEKKAIEEAEKYVKRYYNESGMLTTMVAPHSPYTCSTELLEECARIAVENQTMVHIHLSETEREVRDIEAQYGKRPVEYVASCGLFKRPTVIAHGVVLNDNERAFLAEHDVRVAHNPNSNLKLGSGIANVKAMLEAGMKVGIATDSVASNNNLDMFEEMRIATLLQKGIHQDATALPVETALTLATKGAAEVIGMKQTGSLEVGKCADFITIDPSNKPHLQPADEVLSHLVYAASGKDISDVIINGKRVVWNGECKTLDEERIIFEASRYKRGLQR</sequence>
<evidence type="ECO:0000255" key="1">
    <source>
        <dbReference type="HAMAP-Rule" id="MF_01281"/>
    </source>
</evidence>
<comment type="function">
    <text evidence="1">Catalyzes the deamination of 5-methylthioadenosine and S-adenosyl-L-homocysteine into 5-methylthioinosine and S-inosyl-L-homocysteine, respectively. Is also able to deaminate adenosine.</text>
</comment>
<comment type="catalytic activity">
    <reaction evidence="1">
        <text>S-adenosyl-L-homocysteine + H2O + H(+) = S-inosyl-L-homocysteine + NH4(+)</text>
        <dbReference type="Rhea" id="RHEA:20716"/>
        <dbReference type="ChEBI" id="CHEBI:15377"/>
        <dbReference type="ChEBI" id="CHEBI:15378"/>
        <dbReference type="ChEBI" id="CHEBI:28938"/>
        <dbReference type="ChEBI" id="CHEBI:57856"/>
        <dbReference type="ChEBI" id="CHEBI:57985"/>
        <dbReference type="EC" id="3.5.4.28"/>
    </reaction>
</comment>
<comment type="catalytic activity">
    <reaction evidence="1">
        <text>S-methyl-5'-thioadenosine + H2O + H(+) = S-methyl-5'-thioinosine + NH4(+)</text>
        <dbReference type="Rhea" id="RHEA:25025"/>
        <dbReference type="ChEBI" id="CHEBI:15377"/>
        <dbReference type="ChEBI" id="CHEBI:15378"/>
        <dbReference type="ChEBI" id="CHEBI:17509"/>
        <dbReference type="ChEBI" id="CHEBI:28938"/>
        <dbReference type="ChEBI" id="CHEBI:48595"/>
        <dbReference type="EC" id="3.5.4.31"/>
    </reaction>
</comment>
<comment type="cofactor">
    <cofactor evidence="1">
        <name>Zn(2+)</name>
        <dbReference type="ChEBI" id="CHEBI:29105"/>
    </cofactor>
    <text evidence="1">Binds 1 zinc ion per subunit.</text>
</comment>
<comment type="similarity">
    <text evidence="1">Belongs to the metallo-dependent hydrolases superfamily. MTA/SAH deaminase family.</text>
</comment>
<reference key="1">
    <citation type="submission" date="2008-10" db="EMBL/GenBank/DDBJ databases">
        <title>Genome sequence of Bacillus anthracis str. CDC 684.</title>
        <authorList>
            <person name="Dodson R.J."/>
            <person name="Munk A.C."/>
            <person name="Brettin T."/>
            <person name="Bruce D."/>
            <person name="Detter C."/>
            <person name="Tapia R."/>
            <person name="Han C."/>
            <person name="Sutton G."/>
            <person name="Sims D."/>
        </authorList>
    </citation>
    <scope>NUCLEOTIDE SEQUENCE [LARGE SCALE GENOMIC DNA]</scope>
    <source>
        <strain>CDC 684 / NRRL 3495</strain>
    </source>
</reference>
<protein>
    <recommendedName>
        <fullName evidence="1">5-methylthioadenosine/S-adenosylhomocysteine deaminase</fullName>
        <shortName evidence="1">MTA/SAH deaminase</shortName>
        <ecNumber evidence="1">3.5.4.28</ecNumber>
        <ecNumber evidence="1">3.5.4.31</ecNumber>
    </recommendedName>
</protein>
<feature type="chain" id="PRO_1000165237" description="5-methylthioadenosine/S-adenosylhomocysteine deaminase">
    <location>
        <begin position="1"/>
        <end position="435"/>
    </location>
</feature>
<feature type="binding site" evidence="1">
    <location>
        <position position="65"/>
    </location>
    <ligand>
        <name>Zn(2+)</name>
        <dbReference type="ChEBI" id="CHEBI:29105"/>
    </ligand>
</feature>
<feature type="binding site" evidence="1">
    <location>
        <position position="67"/>
    </location>
    <ligand>
        <name>Zn(2+)</name>
        <dbReference type="ChEBI" id="CHEBI:29105"/>
    </ligand>
</feature>
<feature type="binding site" evidence="1">
    <location>
        <position position="94"/>
    </location>
    <ligand>
        <name>substrate</name>
    </ligand>
</feature>
<feature type="binding site" evidence="1">
    <location>
        <position position="150"/>
    </location>
    <ligand>
        <name>substrate</name>
    </ligand>
</feature>
<feature type="binding site" evidence="1">
    <location>
        <position position="189"/>
    </location>
    <ligand>
        <name>substrate</name>
    </ligand>
</feature>
<feature type="binding site" evidence="1">
    <location>
        <position position="216"/>
    </location>
    <ligand>
        <name>Zn(2+)</name>
        <dbReference type="ChEBI" id="CHEBI:29105"/>
    </ligand>
</feature>
<feature type="binding site" evidence="1">
    <location>
        <position position="219"/>
    </location>
    <ligand>
        <name>substrate</name>
    </ligand>
</feature>
<feature type="binding site" evidence="1">
    <location>
        <position position="304"/>
    </location>
    <ligand>
        <name>substrate</name>
    </ligand>
</feature>
<feature type="binding site" evidence="1">
    <location>
        <position position="304"/>
    </location>
    <ligand>
        <name>Zn(2+)</name>
        <dbReference type="ChEBI" id="CHEBI:29105"/>
    </ligand>
</feature>
<dbReference type="EC" id="3.5.4.28" evidence="1"/>
<dbReference type="EC" id="3.5.4.31" evidence="1"/>
<dbReference type="EMBL" id="CP001215">
    <property type="protein sequence ID" value="ACP12426.1"/>
    <property type="molecule type" value="Genomic_DNA"/>
</dbReference>
<dbReference type="SMR" id="C3L6N3"/>
<dbReference type="KEGG" id="bah:BAMEG_2726"/>
<dbReference type="HOGENOM" id="CLU_012358_2_0_9"/>
<dbReference type="GO" id="GO:0090614">
    <property type="term" value="F:5'-methylthioadenosine deaminase activity"/>
    <property type="evidence" value="ECO:0007669"/>
    <property type="project" value="UniProtKB-UniRule"/>
</dbReference>
<dbReference type="GO" id="GO:0046872">
    <property type="term" value="F:metal ion binding"/>
    <property type="evidence" value="ECO:0007669"/>
    <property type="project" value="UniProtKB-KW"/>
</dbReference>
<dbReference type="GO" id="GO:0050270">
    <property type="term" value="F:S-adenosylhomocysteine deaminase activity"/>
    <property type="evidence" value="ECO:0007669"/>
    <property type="project" value="UniProtKB-UniRule"/>
</dbReference>
<dbReference type="CDD" id="cd01298">
    <property type="entry name" value="ATZ_TRZ_like"/>
    <property type="match status" value="1"/>
</dbReference>
<dbReference type="FunFam" id="3.20.20.140:FF:000014">
    <property type="entry name" value="5-methylthioadenosine/S-adenosylhomocysteine deaminase"/>
    <property type="match status" value="1"/>
</dbReference>
<dbReference type="Gene3D" id="3.20.20.140">
    <property type="entry name" value="Metal-dependent hydrolases"/>
    <property type="match status" value="1"/>
</dbReference>
<dbReference type="Gene3D" id="2.30.40.10">
    <property type="entry name" value="Urease, subunit C, domain 1"/>
    <property type="match status" value="1"/>
</dbReference>
<dbReference type="HAMAP" id="MF_01281">
    <property type="entry name" value="MTA_SAH_deamin"/>
    <property type="match status" value="1"/>
</dbReference>
<dbReference type="InterPro" id="IPR006680">
    <property type="entry name" value="Amidohydro-rel"/>
</dbReference>
<dbReference type="InterPro" id="IPR023512">
    <property type="entry name" value="Deaminase_MtaD/DadD"/>
</dbReference>
<dbReference type="InterPro" id="IPR011059">
    <property type="entry name" value="Metal-dep_hydrolase_composite"/>
</dbReference>
<dbReference type="InterPro" id="IPR032466">
    <property type="entry name" value="Metal_Hydrolase"/>
</dbReference>
<dbReference type="InterPro" id="IPR050287">
    <property type="entry name" value="MTA/SAH_deaminase"/>
</dbReference>
<dbReference type="NCBIfam" id="NF012037">
    <property type="entry name" value="PRK15493.1"/>
    <property type="match status" value="1"/>
</dbReference>
<dbReference type="PANTHER" id="PTHR43794:SF11">
    <property type="entry name" value="AMIDOHYDROLASE-RELATED DOMAIN-CONTAINING PROTEIN"/>
    <property type="match status" value="1"/>
</dbReference>
<dbReference type="PANTHER" id="PTHR43794">
    <property type="entry name" value="AMINOHYDROLASE SSNA-RELATED"/>
    <property type="match status" value="1"/>
</dbReference>
<dbReference type="Pfam" id="PF01979">
    <property type="entry name" value="Amidohydro_1"/>
    <property type="match status" value="1"/>
</dbReference>
<dbReference type="SUPFAM" id="SSF51338">
    <property type="entry name" value="Composite domain of metallo-dependent hydrolases"/>
    <property type="match status" value="1"/>
</dbReference>
<dbReference type="SUPFAM" id="SSF51556">
    <property type="entry name" value="Metallo-dependent hydrolases"/>
    <property type="match status" value="1"/>
</dbReference>